<protein>
    <recommendedName>
        <fullName evidence="1">Large ribosomal subunit protein bL17</fullName>
    </recommendedName>
    <alternativeName>
        <fullName evidence="2">50S ribosomal protein L17</fullName>
    </alternativeName>
</protein>
<comment type="subunit">
    <text evidence="1">Part of the 50S ribosomal subunit. Contacts protein L32.</text>
</comment>
<comment type="similarity">
    <text evidence="1">Belongs to the bacterial ribosomal protein bL17 family.</text>
</comment>
<sequence length="126" mass="14069">MSYRKLGRTSSQRKALLRDLTTSLIVNGSITTTEPRAKEVRKTMDQMITLAKKGDLASRRKAAAFVRNVVADVKEDGDDIKIQSALQNLFEDIAPKYADRNGGYTRILKTMPRRGDGAKMVILELV</sequence>
<organism>
    <name type="scientific">Limosilactobacillus fermentum (strain NBRC 3956 / LMG 18251)</name>
    <name type="common">Lactobacillus fermentum</name>
    <dbReference type="NCBI Taxonomy" id="334390"/>
    <lineage>
        <taxon>Bacteria</taxon>
        <taxon>Bacillati</taxon>
        <taxon>Bacillota</taxon>
        <taxon>Bacilli</taxon>
        <taxon>Lactobacillales</taxon>
        <taxon>Lactobacillaceae</taxon>
        <taxon>Limosilactobacillus</taxon>
    </lineage>
</organism>
<reference key="1">
    <citation type="journal article" date="2008" name="DNA Res.">
        <title>Comparative genome analysis of Lactobacillus reuteri and Lactobacillus fermentum reveal a genomic island for reuterin and cobalamin production.</title>
        <authorList>
            <person name="Morita H."/>
            <person name="Toh H."/>
            <person name="Fukuda S."/>
            <person name="Horikawa H."/>
            <person name="Oshima K."/>
            <person name="Suzuki T."/>
            <person name="Murakami M."/>
            <person name="Hisamatsu S."/>
            <person name="Kato Y."/>
            <person name="Takizawa T."/>
            <person name="Fukuoka H."/>
            <person name="Yoshimura T."/>
            <person name="Itoh K."/>
            <person name="O'Sullivan D.J."/>
            <person name="McKay L.L."/>
            <person name="Ohno H."/>
            <person name="Kikuchi J."/>
            <person name="Masaoka T."/>
            <person name="Hattori M."/>
        </authorList>
    </citation>
    <scope>NUCLEOTIDE SEQUENCE [LARGE SCALE GENOMIC DNA]</scope>
    <source>
        <strain>NBRC 3956 / LMG 18251</strain>
    </source>
</reference>
<accession>B2GDU2</accession>
<proteinExistence type="inferred from homology"/>
<feature type="chain" id="PRO_1000144439" description="Large ribosomal subunit protein bL17">
    <location>
        <begin position="1"/>
        <end position="126"/>
    </location>
</feature>
<gene>
    <name evidence="1" type="primary">rplQ</name>
    <name type="ordered locus">LAF_1488</name>
</gene>
<evidence type="ECO:0000255" key="1">
    <source>
        <dbReference type="HAMAP-Rule" id="MF_01368"/>
    </source>
</evidence>
<evidence type="ECO:0000305" key="2"/>
<keyword id="KW-1185">Reference proteome</keyword>
<keyword id="KW-0687">Ribonucleoprotein</keyword>
<keyword id="KW-0689">Ribosomal protein</keyword>
<dbReference type="EMBL" id="AP008937">
    <property type="protein sequence ID" value="BAG27824.1"/>
    <property type="molecule type" value="Genomic_DNA"/>
</dbReference>
<dbReference type="RefSeq" id="WP_003681616.1">
    <property type="nucleotide sequence ID" value="NC_010610.1"/>
</dbReference>
<dbReference type="SMR" id="B2GDU2"/>
<dbReference type="GeneID" id="83716135"/>
<dbReference type="KEGG" id="lfe:LAF_1488"/>
<dbReference type="eggNOG" id="COG0203">
    <property type="taxonomic scope" value="Bacteria"/>
</dbReference>
<dbReference type="HOGENOM" id="CLU_074407_2_2_9"/>
<dbReference type="Proteomes" id="UP000001697">
    <property type="component" value="Chromosome"/>
</dbReference>
<dbReference type="GO" id="GO:0022625">
    <property type="term" value="C:cytosolic large ribosomal subunit"/>
    <property type="evidence" value="ECO:0007669"/>
    <property type="project" value="TreeGrafter"/>
</dbReference>
<dbReference type="GO" id="GO:0003735">
    <property type="term" value="F:structural constituent of ribosome"/>
    <property type="evidence" value="ECO:0007669"/>
    <property type="project" value="InterPro"/>
</dbReference>
<dbReference type="GO" id="GO:0006412">
    <property type="term" value="P:translation"/>
    <property type="evidence" value="ECO:0007669"/>
    <property type="project" value="UniProtKB-UniRule"/>
</dbReference>
<dbReference type="FunFam" id="3.90.1030.10:FF:000002">
    <property type="entry name" value="50S ribosomal protein L17"/>
    <property type="match status" value="1"/>
</dbReference>
<dbReference type="Gene3D" id="3.90.1030.10">
    <property type="entry name" value="Ribosomal protein L17"/>
    <property type="match status" value="1"/>
</dbReference>
<dbReference type="HAMAP" id="MF_01368">
    <property type="entry name" value="Ribosomal_bL17"/>
    <property type="match status" value="1"/>
</dbReference>
<dbReference type="InterPro" id="IPR000456">
    <property type="entry name" value="Ribosomal_bL17"/>
</dbReference>
<dbReference type="InterPro" id="IPR047859">
    <property type="entry name" value="Ribosomal_bL17_CS"/>
</dbReference>
<dbReference type="InterPro" id="IPR036373">
    <property type="entry name" value="Ribosomal_bL17_sf"/>
</dbReference>
<dbReference type="NCBIfam" id="TIGR00059">
    <property type="entry name" value="L17"/>
    <property type="match status" value="1"/>
</dbReference>
<dbReference type="PANTHER" id="PTHR14413:SF16">
    <property type="entry name" value="LARGE RIBOSOMAL SUBUNIT PROTEIN BL17M"/>
    <property type="match status" value="1"/>
</dbReference>
<dbReference type="PANTHER" id="PTHR14413">
    <property type="entry name" value="RIBOSOMAL PROTEIN L17"/>
    <property type="match status" value="1"/>
</dbReference>
<dbReference type="Pfam" id="PF01196">
    <property type="entry name" value="Ribosomal_L17"/>
    <property type="match status" value="1"/>
</dbReference>
<dbReference type="SUPFAM" id="SSF64263">
    <property type="entry name" value="Prokaryotic ribosomal protein L17"/>
    <property type="match status" value="1"/>
</dbReference>
<dbReference type="PROSITE" id="PS01167">
    <property type="entry name" value="RIBOSOMAL_L17"/>
    <property type="match status" value="1"/>
</dbReference>
<name>RL17_LIMF3</name>